<evidence type="ECO:0000250" key="1"/>
<evidence type="ECO:0000255" key="2">
    <source>
        <dbReference type="PROSITE-ProRule" id="PRU10110"/>
    </source>
</evidence>
<evidence type="ECO:0000305" key="3"/>
<gene>
    <name type="primary">URA3</name>
</gene>
<organism>
    <name type="scientific">Aureobasidium pullulans</name>
    <name type="common">Black yeast</name>
    <name type="synonym">Pullularia pullulans</name>
    <dbReference type="NCBI Taxonomy" id="5580"/>
    <lineage>
        <taxon>Eukaryota</taxon>
        <taxon>Fungi</taxon>
        <taxon>Dikarya</taxon>
        <taxon>Ascomycota</taxon>
        <taxon>Pezizomycotina</taxon>
        <taxon>Dothideomycetes</taxon>
        <taxon>Dothideomycetidae</taxon>
        <taxon>Dothideales</taxon>
        <taxon>Saccotheciaceae</taxon>
        <taxon>Aureobasidium</taxon>
    </lineage>
</organism>
<proteinExistence type="inferred from homology"/>
<accession>Q9P8X9</accession>
<name>PYRF_AURPU</name>
<dbReference type="EC" id="4.1.1.23"/>
<dbReference type="EMBL" id="AF165169">
    <property type="protein sequence ID" value="AAF60964.1"/>
    <property type="molecule type" value="Genomic_DNA"/>
</dbReference>
<dbReference type="SMR" id="Q9P8X9"/>
<dbReference type="UniPathway" id="UPA00070">
    <property type="reaction ID" value="UER00120"/>
</dbReference>
<dbReference type="GO" id="GO:0004588">
    <property type="term" value="F:orotate phosphoribosyltransferase activity"/>
    <property type="evidence" value="ECO:0007669"/>
    <property type="project" value="TreeGrafter"/>
</dbReference>
<dbReference type="GO" id="GO:0004590">
    <property type="term" value="F:orotidine-5'-phosphate decarboxylase activity"/>
    <property type="evidence" value="ECO:0007669"/>
    <property type="project" value="UniProtKB-EC"/>
</dbReference>
<dbReference type="GO" id="GO:0006207">
    <property type="term" value="P:'de novo' pyrimidine nucleobase biosynthetic process"/>
    <property type="evidence" value="ECO:0007669"/>
    <property type="project" value="InterPro"/>
</dbReference>
<dbReference type="GO" id="GO:0044205">
    <property type="term" value="P:'de novo' UMP biosynthetic process"/>
    <property type="evidence" value="ECO:0007669"/>
    <property type="project" value="UniProtKB-UniPathway"/>
</dbReference>
<dbReference type="CDD" id="cd04725">
    <property type="entry name" value="OMP_decarboxylase_like"/>
    <property type="match status" value="1"/>
</dbReference>
<dbReference type="FunFam" id="3.20.20.70:FF:000114">
    <property type="entry name" value="Decarboxylase,orotidine phosphate"/>
    <property type="match status" value="1"/>
</dbReference>
<dbReference type="Gene3D" id="3.20.20.70">
    <property type="entry name" value="Aldolase class I"/>
    <property type="match status" value="1"/>
</dbReference>
<dbReference type="InterPro" id="IPR013785">
    <property type="entry name" value="Aldolase_TIM"/>
</dbReference>
<dbReference type="InterPro" id="IPR014732">
    <property type="entry name" value="OMPdecase"/>
</dbReference>
<dbReference type="InterPro" id="IPR018089">
    <property type="entry name" value="OMPdecase_AS"/>
</dbReference>
<dbReference type="InterPro" id="IPR001754">
    <property type="entry name" value="OMPdeCOase_dom"/>
</dbReference>
<dbReference type="InterPro" id="IPR011060">
    <property type="entry name" value="RibuloseP-bd_barrel"/>
</dbReference>
<dbReference type="NCBIfam" id="TIGR01740">
    <property type="entry name" value="pyrF"/>
    <property type="match status" value="1"/>
</dbReference>
<dbReference type="PANTHER" id="PTHR19278">
    <property type="entry name" value="OROTATE PHOSPHORIBOSYLTRANSFERASE"/>
    <property type="match status" value="1"/>
</dbReference>
<dbReference type="PANTHER" id="PTHR19278:SF9">
    <property type="entry name" value="URIDINE 5'-MONOPHOSPHATE SYNTHASE"/>
    <property type="match status" value="1"/>
</dbReference>
<dbReference type="Pfam" id="PF00215">
    <property type="entry name" value="OMPdecase"/>
    <property type="match status" value="1"/>
</dbReference>
<dbReference type="SMART" id="SM00934">
    <property type="entry name" value="OMPdecase"/>
    <property type="match status" value="1"/>
</dbReference>
<dbReference type="SUPFAM" id="SSF51366">
    <property type="entry name" value="Ribulose-phoshate binding barrel"/>
    <property type="match status" value="1"/>
</dbReference>
<dbReference type="PROSITE" id="PS00156">
    <property type="entry name" value="OMPDECASE"/>
    <property type="match status" value="1"/>
</dbReference>
<keyword id="KW-0210">Decarboxylase</keyword>
<keyword id="KW-0456">Lyase</keyword>
<keyword id="KW-0665">Pyrimidine biosynthesis</keyword>
<comment type="catalytic activity">
    <reaction evidence="2">
        <text>orotidine 5'-phosphate + H(+) = UMP + CO2</text>
        <dbReference type="Rhea" id="RHEA:11596"/>
        <dbReference type="ChEBI" id="CHEBI:15378"/>
        <dbReference type="ChEBI" id="CHEBI:16526"/>
        <dbReference type="ChEBI" id="CHEBI:57538"/>
        <dbReference type="ChEBI" id="CHEBI:57865"/>
        <dbReference type="EC" id="4.1.1.23"/>
    </reaction>
</comment>
<comment type="pathway">
    <text>Pyrimidine metabolism; UMP biosynthesis via de novo pathway; UMP from orotate: step 2/2.</text>
</comment>
<comment type="similarity">
    <text evidence="3">Belongs to the OMP decarboxylase family.</text>
</comment>
<sequence>MSRHATITQSYQERASLPKTSPVASYLLRLIAAKKTNLCVSADVSTTRELLQLAEEVGDSICMLKTHADIINDFGPRTIEGLKEIAAKKHFLVFEDRKFGDIGSTVQKQFTAGPLQIVRWANIINAHIFPGPAIITALSQARPRCRQLLILAEMSSAGNLMTGSYTEQCVVEARKNPEFVMGFIAQRTLNEQPGDNFITMTPGVQIGATGDGLGQQYNTPEKVIGEAGTDIIIVGRGVYGAQDKRAKAEEYRVRAWKAYEGNWRCYCNKR</sequence>
<reference key="1">
    <citation type="journal article" date="2000" name="Appl. Microbiol. Biotechnol.">
        <title>Molecular analysis of the Aureobasidium pullulans ura3 gene encoding orotidine-5'-phosphate decarboxylase and isolation of mutants defective in this gene.</title>
        <authorList>
            <person name="Rose K."/>
            <person name="Liebergesell M."/>
            <person name="Steinbuechel A."/>
        </authorList>
    </citation>
    <scope>NUCLEOTIDE SEQUENCE [GENOMIC DNA]</scope>
    <source>
        <strain>CBS 591.75</strain>
    </source>
</reference>
<protein>
    <recommendedName>
        <fullName>Orotidine 5'-phosphate decarboxylase</fullName>
        <ecNumber>4.1.1.23</ecNumber>
    </recommendedName>
    <alternativeName>
        <fullName>OMP decarboxylase</fullName>
        <shortName>OMPDCase</shortName>
        <shortName>OMPdecase</shortName>
    </alternativeName>
    <alternativeName>
        <fullName>Uridine 5'-monophosphate synthase</fullName>
        <shortName>UMP synthase</shortName>
    </alternativeName>
</protein>
<feature type="chain" id="PRO_0000134645" description="Orotidine 5'-phosphate decarboxylase">
    <location>
        <begin position="1"/>
        <end position="270"/>
    </location>
</feature>
<feature type="active site" description="Proton donor" evidence="2">
    <location>
        <position position="98"/>
    </location>
</feature>
<feature type="binding site" evidence="1">
    <location>
        <position position="43"/>
    </location>
    <ligand>
        <name>substrate</name>
    </ligand>
</feature>
<feature type="binding site" evidence="1">
    <location>
        <begin position="65"/>
        <end position="67"/>
    </location>
    <ligand>
        <name>substrate</name>
    </ligand>
</feature>
<feature type="binding site" evidence="1">
    <location>
        <begin position="96"/>
        <end position="105"/>
    </location>
    <ligand>
        <name>substrate</name>
    </ligand>
</feature>
<feature type="binding site" evidence="1">
    <location>
        <position position="217"/>
    </location>
    <ligand>
        <name>substrate</name>
    </ligand>
</feature>
<feature type="binding site" evidence="1">
    <location>
        <position position="236"/>
    </location>
    <ligand>
        <name>substrate</name>
    </ligand>
</feature>